<gene>
    <name evidence="1" type="primary">rnhB</name>
    <name type="ordered locus">Sbal_1464</name>
</gene>
<comment type="function">
    <text evidence="1">Endonuclease that specifically degrades the RNA of RNA-DNA hybrids.</text>
</comment>
<comment type="catalytic activity">
    <reaction evidence="1">
        <text>Endonucleolytic cleavage to 5'-phosphomonoester.</text>
        <dbReference type="EC" id="3.1.26.4"/>
    </reaction>
</comment>
<comment type="cofactor">
    <cofactor evidence="1">
        <name>Mn(2+)</name>
        <dbReference type="ChEBI" id="CHEBI:29035"/>
    </cofactor>
    <cofactor evidence="1">
        <name>Mg(2+)</name>
        <dbReference type="ChEBI" id="CHEBI:18420"/>
    </cofactor>
    <text evidence="1">Manganese or magnesium. Binds 1 divalent metal ion per monomer in the absence of substrate. May bind a second metal ion after substrate binding.</text>
</comment>
<comment type="subcellular location">
    <subcellularLocation>
        <location evidence="1">Cytoplasm</location>
    </subcellularLocation>
</comment>
<comment type="similarity">
    <text evidence="1">Belongs to the RNase HII family.</text>
</comment>
<name>RNH2_SHEB5</name>
<feature type="chain" id="PRO_1000031198" description="Ribonuclease HII">
    <location>
        <begin position="1"/>
        <end position="210"/>
    </location>
</feature>
<feature type="domain" description="RNase H type-2" evidence="2">
    <location>
        <begin position="18"/>
        <end position="210"/>
    </location>
</feature>
<feature type="binding site" evidence="1">
    <location>
        <position position="24"/>
    </location>
    <ligand>
        <name>a divalent metal cation</name>
        <dbReference type="ChEBI" id="CHEBI:60240"/>
    </ligand>
</feature>
<feature type="binding site" evidence="1">
    <location>
        <position position="25"/>
    </location>
    <ligand>
        <name>a divalent metal cation</name>
        <dbReference type="ChEBI" id="CHEBI:60240"/>
    </ligand>
</feature>
<feature type="binding site" evidence="1">
    <location>
        <position position="116"/>
    </location>
    <ligand>
        <name>a divalent metal cation</name>
        <dbReference type="ChEBI" id="CHEBI:60240"/>
    </ligand>
</feature>
<dbReference type="EC" id="3.1.26.4" evidence="1"/>
<dbReference type="EMBL" id="CP000563">
    <property type="protein sequence ID" value="ABN60982.1"/>
    <property type="molecule type" value="Genomic_DNA"/>
</dbReference>
<dbReference type="RefSeq" id="WP_011846356.1">
    <property type="nucleotide sequence ID" value="NC_009052.1"/>
</dbReference>
<dbReference type="SMR" id="A3D2L9"/>
<dbReference type="STRING" id="325240.Sbal_1464"/>
<dbReference type="KEGG" id="sbl:Sbal_1464"/>
<dbReference type="HOGENOM" id="CLU_036532_3_2_6"/>
<dbReference type="OrthoDB" id="9803420at2"/>
<dbReference type="Proteomes" id="UP000001557">
    <property type="component" value="Chromosome"/>
</dbReference>
<dbReference type="GO" id="GO:0005737">
    <property type="term" value="C:cytoplasm"/>
    <property type="evidence" value="ECO:0007669"/>
    <property type="project" value="UniProtKB-SubCell"/>
</dbReference>
<dbReference type="GO" id="GO:0032299">
    <property type="term" value="C:ribonuclease H2 complex"/>
    <property type="evidence" value="ECO:0007669"/>
    <property type="project" value="TreeGrafter"/>
</dbReference>
<dbReference type="GO" id="GO:0030145">
    <property type="term" value="F:manganese ion binding"/>
    <property type="evidence" value="ECO:0007669"/>
    <property type="project" value="UniProtKB-UniRule"/>
</dbReference>
<dbReference type="GO" id="GO:0003723">
    <property type="term" value="F:RNA binding"/>
    <property type="evidence" value="ECO:0007669"/>
    <property type="project" value="InterPro"/>
</dbReference>
<dbReference type="GO" id="GO:0004523">
    <property type="term" value="F:RNA-DNA hybrid ribonuclease activity"/>
    <property type="evidence" value="ECO:0007669"/>
    <property type="project" value="UniProtKB-UniRule"/>
</dbReference>
<dbReference type="GO" id="GO:0043137">
    <property type="term" value="P:DNA replication, removal of RNA primer"/>
    <property type="evidence" value="ECO:0007669"/>
    <property type="project" value="TreeGrafter"/>
</dbReference>
<dbReference type="GO" id="GO:0006298">
    <property type="term" value="P:mismatch repair"/>
    <property type="evidence" value="ECO:0007669"/>
    <property type="project" value="TreeGrafter"/>
</dbReference>
<dbReference type="CDD" id="cd07182">
    <property type="entry name" value="RNase_HII_bacteria_HII_like"/>
    <property type="match status" value="1"/>
</dbReference>
<dbReference type="FunFam" id="3.30.420.10:FF:000006">
    <property type="entry name" value="Ribonuclease HII"/>
    <property type="match status" value="1"/>
</dbReference>
<dbReference type="Gene3D" id="3.30.420.10">
    <property type="entry name" value="Ribonuclease H-like superfamily/Ribonuclease H"/>
    <property type="match status" value="1"/>
</dbReference>
<dbReference type="HAMAP" id="MF_00052_B">
    <property type="entry name" value="RNase_HII_B"/>
    <property type="match status" value="1"/>
</dbReference>
<dbReference type="InterPro" id="IPR022898">
    <property type="entry name" value="RNase_HII"/>
</dbReference>
<dbReference type="InterPro" id="IPR001352">
    <property type="entry name" value="RNase_HII/HIII"/>
</dbReference>
<dbReference type="InterPro" id="IPR024567">
    <property type="entry name" value="RNase_HII/HIII_dom"/>
</dbReference>
<dbReference type="InterPro" id="IPR012337">
    <property type="entry name" value="RNaseH-like_sf"/>
</dbReference>
<dbReference type="InterPro" id="IPR036397">
    <property type="entry name" value="RNaseH_sf"/>
</dbReference>
<dbReference type="NCBIfam" id="NF000594">
    <property type="entry name" value="PRK00015.1-1"/>
    <property type="match status" value="1"/>
</dbReference>
<dbReference type="NCBIfam" id="NF000595">
    <property type="entry name" value="PRK00015.1-3"/>
    <property type="match status" value="1"/>
</dbReference>
<dbReference type="NCBIfam" id="NF000596">
    <property type="entry name" value="PRK00015.1-4"/>
    <property type="match status" value="1"/>
</dbReference>
<dbReference type="PANTHER" id="PTHR10954">
    <property type="entry name" value="RIBONUCLEASE H2 SUBUNIT A"/>
    <property type="match status" value="1"/>
</dbReference>
<dbReference type="PANTHER" id="PTHR10954:SF18">
    <property type="entry name" value="RIBONUCLEASE HII"/>
    <property type="match status" value="1"/>
</dbReference>
<dbReference type="Pfam" id="PF01351">
    <property type="entry name" value="RNase_HII"/>
    <property type="match status" value="1"/>
</dbReference>
<dbReference type="SUPFAM" id="SSF53098">
    <property type="entry name" value="Ribonuclease H-like"/>
    <property type="match status" value="1"/>
</dbReference>
<dbReference type="PROSITE" id="PS51975">
    <property type="entry name" value="RNASE_H_2"/>
    <property type="match status" value="1"/>
</dbReference>
<reference key="1">
    <citation type="submission" date="2007-02" db="EMBL/GenBank/DDBJ databases">
        <title>Complete sequence of chromosome of Shewanella baltica OS155.</title>
        <authorList>
            <consortium name="US DOE Joint Genome Institute"/>
            <person name="Copeland A."/>
            <person name="Lucas S."/>
            <person name="Lapidus A."/>
            <person name="Barry K."/>
            <person name="Detter J.C."/>
            <person name="Glavina del Rio T."/>
            <person name="Hammon N."/>
            <person name="Israni S."/>
            <person name="Dalin E."/>
            <person name="Tice H."/>
            <person name="Pitluck S."/>
            <person name="Sims D.R."/>
            <person name="Brettin T."/>
            <person name="Bruce D."/>
            <person name="Han C."/>
            <person name="Tapia R."/>
            <person name="Brainard J."/>
            <person name="Schmutz J."/>
            <person name="Larimer F."/>
            <person name="Land M."/>
            <person name="Hauser L."/>
            <person name="Kyrpides N."/>
            <person name="Mikhailova N."/>
            <person name="Brettar I."/>
            <person name="Klappenbach J."/>
            <person name="Konstantinidis K."/>
            <person name="Rodrigues J."/>
            <person name="Tiedje J."/>
            <person name="Richardson P."/>
        </authorList>
    </citation>
    <scope>NUCLEOTIDE SEQUENCE [LARGE SCALE GENOMIC DNA]</scope>
    <source>
        <strain>OS155 / ATCC BAA-1091</strain>
    </source>
</reference>
<organism>
    <name type="scientific">Shewanella baltica (strain OS155 / ATCC BAA-1091)</name>
    <dbReference type="NCBI Taxonomy" id="325240"/>
    <lineage>
        <taxon>Bacteria</taxon>
        <taxon>Pseudomonadati</taxon>
        <taxon>Pseudomonadota</taxon>
        <taxon>Gammaproteobacteria</taxon>
        <taxon>Alteromonadales</taxon>
        <taxon>Shewanellaceae</taxon>
        <taxon>Shewanella</taxon>
    </lineage>
</organism>
<accession>A3D2L9</accession>
<proteinExistence type="inferred from homology"/>
<protein>
    <recommendedName>
        <fullName evidence="1">Ribonuclease HII</fullName>
        <shortName evidence="1">RNase HII</shortName>
        <ecNumber evidence="1">3.1.26.4</ecNumber>
    </recommendedName>
</protein>
<keyword id="KW-0963">Cytoplasm</keyword>
<keyword id="KW-0255">Endonuclease</keyword>
<keyword id="KW-0378">Hydrolase</keyword>
<keyword id="KW-0464">Manganese</keyword>
<keyword id="KW-0479">Metal-binding</keyword>
<keyword id="KW-0540">Nuclease</keyword>
<keyword id="KW-1185">Reference proteome</keyword>
<sequence length="210" mass="22552">MAIYKSLTEADLLAFSTGLIAGVDEVGRGPLVGDVVTAAVILDPNKPISGLNDSKKLSEKRREALFDEICDKALCYHVGRASPAEIDELNILHATMLAMQRAVAGLNIAPELVLVDGNRSPIFVAHNGAELTSHSIIKGDGLIASISAASIIAKVTRDREMDVLDAAYPQYGFAKHKGYPTKAHFEAIAEHGVFDQYRKSFKPVKALLGL</sequence>
<evidence type="ECO:0000255" key="1">
    <source>
        <dbReference type="HAMAP-Rule" id="MF_00052"/>
    </source>
</evidence>
<evidence type="ECO:0000255" key="2">
    <source>
        <dbReference type="PROSITE-ProRule" id="PRU01319"/>
    </source>
</evidence>